<protein>
    <recommendedName>
        <fullName>Somatolactin</fullName>
        <shortName>SL</shortName>
    </recommendedName>
</protein>
<sequence length="230" mass="26113">MIKTKVLQAWMGIWLCAVNGLLGSDQDCSDRDPTGSRCSISVEKLLDRAIQHAELIYRISDEARTLFEEMFIPLLIPAHQVHGGNSCTSNLVRVPISKLEIQQISDKWLLHSISILVQVWIEPLADLQDSLDMYDNVPSSLISKTRWMSTKLMNLKQGVLVLMSKMLDEGSVELENNESMLRHIVAPAMAEHVLRDYAVLSCFKKDAHKMETFLKLLRCRQTDNPTCSLF</sequence>
<name>SOML_ICTPU</name>
<dbReference type="EMBL" id="AF267991">
    <property type="protein sequence ID" value="AAF78945.1"/>
    <property type="molecule type" value="mRNA"/>
</dbReference>
<dbReference type="RefSeq" id="NP_001187017.1">
    <property type="nucleotide sequence ID" value="NM_001200088.1"/>
</dbReference>
<dbReference type="SMR" id="Q9I8J9"/>
<dbReference type="STRING" id="7998.ENSIPUP00000030302"/>
<dbReference type="GeneID" id="100304502"/>
<dbReference type="CTD" id="32601"/>
<dbReference type="Proteomes" id="UP000221080">
    <property type="component" value="Unplaced"/>
</dbReference>
<dbReference type="GO" id="GO:0005615">
    <property type="term" value="C:extracellular space"/>
    <property type="evidence" value="ECO:0007669"/>
    <property type="project" value="TreeGrafter"/>
</dbReference>
<dbReference type="GO" id="GO:0070186">
    <property type="term" value="F:growth hormone activity"/>
    <property type="evidence" value="ECO:0007669"/>
    <property type="project" value="TreeGrafter"/>
</dbReference>
<dbReference type="GO" id="GO:0005131">
    <property type="term" value="F:growth hormone receptor binding"/>
    <property type="evidence" value="ECO:0007669"/>
    <property type="project" value="TreeGrafter"/>
</dbReference>
<dbReference type="GO" id="GO:0048513">
    <property type="term" value="P:animal organ development"/>
    <property type="evidence" value="ECO:0007669"/>
    <property type="project" value="TreeGrafter"/>
</dbReference>
<dbReference type="GO" id="GO:0060396">
    <property type="term" value="P:growth hormone receptor signaling pathway"/>
    <property type="evidence" value="ECO:0007669"/>
    <property type="project" value="TreeGrafter"/>
</dbReference>
<dbReference type="GO" id="GO:0045927">
    <property type="term" value="P:positive regulation of growth"/>
    <property type="evidence" value="ECO:0007669"/>
    <property type="project" value="TreeGrafter"/>
</dbReference>
<dbReference type="GO" id="GO:0046427">
    <property type="term" value="P:positive regulation of receptor signaling pathway via JAK-STAT"/>
    <property type="evidence" value="ECO:0007669"/>
    <property type="project" value="TreeGrafter"/>
</dbReference>
<dbReference type="GO" id="GO:0031667">
    <property type="term" value="P:response to nutrient levels"/>
    <property type="evidence" value="ECO:0007669"/>
    <property type="project" value="TreeGrafter"/>
</dbReference>
<dbReference type="Gene3D" id="1.20.1250.10">
    <property type="match status" value="1"/>
</dbReference>
<dbReference type="InterPro" id="IPR009079">
    <property type="entry name" value="4_helix_cytokine-like_core"/>
</dbReference>
<dbReference type="InterPro" id="IPR001400">
    <property type="entry name" value="Somatotropin/Prolactin"/>
</dbReference>
<dbReference type="InterPro" id="IPR018116">
    <property type="entry name" value="Somatotropin_CS"/>
</dbReference>
<dbReference type="PANTHER" id="PTHR11417:SF3">
    <property type="entry name" value="SOMATOLACTIN ALPHA ISOFORM X1-RELATED"/>
    <property type="match status" value="1"/>
</dbReference>
<dbReference type="PANTHER" id="PTHR11417">
    <property type="entry name" value="SOMATOTROPIN,PROLACTIN"/>
    <property type="match status" value="1"/>
</dbReference>
<dbReference type="Pfam" id="PF00103">
    <property type="entry name" value="Hormone_1"/>
    <property type="match status" value="1"/>
</dbReference>
<dbReference type="PRINTS" id="PR00836">
    <property type="entry name" value="SOMATOTROPIN"/>
</dbReference>
<dbReference type="SUPFAM" id="SSF47266">
    <property type="entry name" value="4-helical cytokines"/>
    <property type="match status" value="1"/>
</dbReference>
<dbReference type="PROSITE" id="PS00266">
    <property type="entry name" value="SOMATOTROPIN_1"/>
    <property type="match status" value="1"/>
</dbReference>
<dbReference type="PROSITE" id="PS00338">
    <property type="entry name" value="SOMATOTROPIN_2"/>
    <property type="match status" value="1"/>
</dbReference>
<comment type="subcellular location">
    <subcellularLocation>
        <location>Secreted</location>
    </subcellularLocation>
</comment>
<comment type="similarity">
    <text evidence="3">Belongs to the somatotropin/prolactin family.</text>
</comment>
<proteinExistence type="evidence at transcript level"/>
<accession>Q9I8J9</accession>
<feature type="signal peptide" evidence="2">
    <location>
        <begin position="1"/>
        <end position="23"/>
    </location>
</feature>
<feature type="chain" id="PRO_0000033070" description="Somatolactin">
    <location>
        <begin position="24"/>
        <end position="230"/>
    </location>
</feature>
<feature type="glycosylation site" description="N-linked (GlcNAc...) asparagine" evidence="2">
    <location>
        <position position="177"/>
    </location>
</feature>
<feature type="disulfide bond" evidence="1">
    <location>
        <begin position="28"/>
        <end position="38"/>
    </location>
</feature>
<feature type="disulfide bond" evidence="1">
    <location>
        <begin position="87"/>
        <end position="202"/>
    </location>
</feature>
<feature type="disulfide bond" evidence="1">
    <location>
        <begin position="219"/>
        <end position="227"/>
    </location>
</feature>
<keyword id="KW-1015">Disulfide bond</keyword>
<keyword id="KW-0325">Glycoprotein</keyword>
<keyword id="KW-0372">Hormone</keyword>
<keyword id="KW-0964">Secreted</keyword>
<keyword id="KW-0732">Signal</keyword>
<reference key="1">
    <citation type="thesis" date="1993" institute="University of Maryland" country="United States">
        <title>A study on the channel catfish (Ictalurus punctatus) growth hormone gene family: structures of growth hormone and prolactin genes and somatolactin cDNA, their evolutionary implications and expression in the pituitary gland.</title>
        <authorList>
            <person name="Tang Y."/>
        </authorList>
    </citation>
    <scope>NUCLEOTIDE SEQUENCE [MRNA]</scope>
    <source>
        <tissue>Pituitary</tissue>
    </source>
</reference>
<organism>
    <name type="scientific">Ictalurus punctatus</name>
    <name type="common">Channel catfish</name>
    <name type="synonym">Silurus punctatus</name>
    <dbReference type="NCBI Taxonomy" id="7998"/>
    <lineage>
        <taxon>Eukaryota</taxon>
        <taxon>Metazoa</taxon>
        <taxon>Chordata</taxon>
        <taxon>Craniata</taxon>
        <taxon>Vertebrata</taxon>
        <taxon>Euteleostomi</taxon>
        <taxon>Actinopterygii</taxon>
        <taxon>Neopterygii</taxon>
        <taxon>Teleostei</taxon>
        <taxon>Ostariophysi</taxon>
        <taxon>Siluriformes</taxon>
        <taxon>Ictaluridae</taxon>
        <taxon>Ictalurus</taxon>
    </lineage>
</organism>
<evidence type="ECO:0000250" key="1"/>
<evidence type="ECO:0000255" key="2"/>
<evidence type="ECO:0000305" key="3"/>